<protein>
    <recommendedName>
        <fullName evidence="1">UPF0391 membrane protein BRADO2787</fullName>
    </recommendedName>
</protein>
<gene>
    <name type="ordered locus">BRADO2787</name>
</gene>
<proteinExistence type="inferred from homology"/>
<accession>A4YRS1</accession>
<evidence type="ECO:0000255" key="1">
    <source>
        <dbReference type="HAMAP-Rule" id="MF_01361"/>
    </source>
</evidence>
<name>Y2787_BRASO</name>
<organism>
    <name type="scientific">Bradyrhizobium sp. (strain ORS 278)</name>
    <dbReference type="NCBI Taxonomy" id="114615"/>
    <lineage>
        <taxon>Bacteria</taxon>
        <taxon>Pseudomonadati</taxon>
        <taxon>Pseudomonadota</taxon>
        <taxon>Alphaproteobacteria</taxon>
        <taxon>Hyphomicrobiales</taxon>
        <taxon>Nitrobacteraceae</taxon>
        <taxon>Bradyrhizobium</taxon>
    </lineage>
</organism>
<reference key="1">
    <citation type="journal article" date="2007" name="Science">
        <title>Legumes symbioses: absence of nod genes in photosynthetic bradyrhizobia.</title>
        <authorList>
            <person name="Giraud E."/>
            <person name="Moulin L."/>
            <person name="Vallenet D."/>
            <person name="Barbe V."/>
            <person name="Cytryn E."/>
            <person name="Avarre J.-C."/>
            <person name="Jaubert M."/>
            <person name="Simon D."/>
            <person name="Cartieaux F."/>
            <person name="Prin Y."/>
            <person name="Bena G."/>
            <person name="Hannibal L."/>
            <person name="Fardoux J."/>
            <person name="Kojadinovic M."/>
            <person name="Vuillet L."/>
            <person name="Lajus A."/>
            <person name="Cruveiller S."/>
            <person name="Rouy Z."/>
            <person name="Mangenot S."/>
            <person name="Segurens B."/>
            <person name="Dossat C."/>
            <person name="Franck W.L."/>
            <person name="Chang W.-S."/>
            <person name="Saunders E."/>
            <person name="Bruce D."/>
            <person name="Richardson P."/>
            <person name="Normand P."/>
            <person name="Dreyfus B."/>
            <person name="Pignol D."/>
            <person name="Stacey G."/>
            <person name="Emerich D."/>
            <person name="Vermeglio A."/>
            <person name="Medigue C."/>
            <person name="Sadowsky M."/>
        </authorList>
    </citation>
    <scope>NUCLEOTIDE SEQUENCE [LARGE SCALE GENOMIC DNA]</scope>
    <source>
        <strain>ORS 278</strain>
    </source>
</reference>
<comment type="subcellular location">
    <subcellularLocation>
        <location evidence="1">Cell membrane</location>
        <topology evidence="1">Multi-pass membrane protein</topology>
    </subcellularLocation>
</comment>
<comment type="similarity">
    <text evidence="1">Belongs to the UPF0391 family.</text>
</comment>
<feature type="chain" id="PRO_0000298593" description="UPF0391 membrane protein BRADO2787">
    <location>
        <begin position="1"/>
        <end position="57"/>
    </location>
</feature>
<feature type="transmembrane region" description="Helical" evidence="1">
    <location>
        <begin position="6"/>
        <end position="26"/>
    </location>
</feature>
<feature type="transmembrane region" description="Helical" evidence="1">
    <location>
        <begin position="35"/>
        <end position="55"/>
    </location>
</feature>
<dbReference type="EMBL" id="CU234118">
    <property type="protein sequence ID" value="CAL76597.1"/>
    <property type="molecule type" value="Genomic_DNA"/>
</dbReference>
<dbReference type="RefSeq" id="WP_011925801.1">
    <property type="nucleotide sequence ID" value="NC_009445.1"/>
</dbReference>
<dbReference type="STRING" id="114615.BRADO2787"/>
<dbReference type="KEGG" id="bra:BRADO2787"/>
<dbReference type="eggNOG" id="COG5487">
    <property type="taxonomic scope" value="Bacteria"/>
</dbReference>
<dbReference type="HOGENOM" id="CLU_187346_1_1_5"/>
<dbReference type="OrthoDB" id="8021162at2"/>
<dbReference type="Proteomes" id="UP000001994">
    <property type="component" value="Chromosome"/>
</dbReference>
<dbReference type="GO" id="GO:0005886">
    <property type="term" value="C:plasma membrane"/>
    <property type="evidence" value="ECO:0007669"/>
    <property type="project" value="UniProtKB-SubCell"/>
</dbReference>
<dbReference type="HAMAP" id="MF_01361">
    <property type="entry name" value="UPF0391"/>
    <property type="match status" value="1"/>
</dbReference>
<dbReference type="InterPro" id="IPR009760">
    <property type="entry name" value="DUF1328"/>
</dbReference>
<dbReference type="NCBIfam" id="NF010226">
    <property type="entry name" value="PRK13682.1-1"/>
    <property type="match status" value="1"/>
</dbReference>
<dbReference type="NCBIfam" id="NF010232">
    <property type="entry name" value="PRK13682.2-2"/>
    <property type="match status" value="1"/>
</dbReference>
<dbReference type="NCBIfam" id="NF010234">
    <property type="entry name" value="PRK13682.2-5"/>
    <property type="match status" value="1"/>
</dbReference>
<dbReference type="Pfam" id="PF07043">
    <property type="entry name" value="DUF1328"/>
    <property type="match status" value="1"/>
</dbReference>
<dbReference type="PIRSF" id="PIRSF036466">
    <property type="entry name" value="UCP036466"/>
    <property type="match status" value="1"/>
</dbReference>
<keyword id="KW-1003">Cell membrane</keyword>
<keyword id="KW-0472">Membrane</keyword>
<keyword id="KW-1185">Reference proteome</keyword>
<keyword id="KW-0812">Transmembrane</keyword>
<keyword id="KW-1133">Transmembrane helix</keyword>
<sequence length="57" mass="6261">MTLLKWALLFFVISVVAGILGFTGVSAASADIARILFYIFLVIFLVLLILGLTIFRV</sequence>